<organism>
    <name type="scientific">Bacillus cereus (strain G9842)</name>
    <dbReference type="NCBI Taxonomy" id="405531"/>
    <lineage>
        <taxon>Bacteria</taxon>
        <taxon>Bacillati</taxon>
        <taxon>Bacillota</taxon>
        <taxon>Bacilli</taxon>
        <taxon>Bacillales</taxon>
        <taxon>Bacillaceae</taxon>
        <taxon>Bacillus</taxon>
        <taxon>Bacillus cereus group</taxon>
    </lineage>
</organism>
<name>PGK_BACC2</name>
<keyword id="KW-0067">ATP-binding</keyword>
<keyword id="KW-0963">Cytoplasm</keyword>
<keyword id="KW-0324">Glycolysis</keyword>
<keyword id="KW-0418">Kinase</keyword>
<keyword id="KW-0547">Nucleotide-binding</keyword>
<keyword id="KW-0597">Phosphoprotein</keyword>
<keyword id="KW-0808">Transferase</keyword>
<proteinExistence type="inferred from homology"/>
<protein>
    <recommendedName>
        <fullName evidence="1">Phosphoglycerate kinase</fullName>
        <ecNumber evidence="1">2.7.2.3</ecNumber>
    </recommendedName>
</protein>
<accession>B7IP23</accession>
<evidence type="ECO:0000255" key="1">
    <source>
        <dbReference type="HAMAP-Rule" id="MF_00145"/>
    </source>
</evidence>
<sequence>MNKKSIRDVDLKGKRVFCRVDFNVPMKEGKITDETRIRAALPTIQYLVEQGAKVILASHLGRPKGQAVEELRLTPVAARLGELLGKDVKKADEAFGPVAQEMVAAMNEGDVLVLENVRFYAGEEKNDAELAKEFAALADIFVNDAFGAAHRAHASTAGIADYLPAVSGLLMEKELDVLGKALSNPERPFTAIIGGAKVKDKIGVIRHLLDKVDNLIIGGGLAYTFVKALGHEIGLSLCEDDKIELAKEFMQLAKEKGVNFYMPVDVVITEEFSETATTQIVGIDSIPSNWEGVDIGPKTREIYADVIKNSKLVVWNGPMGVFEMTPFAEGTKAVGQALADAEDTYSVIGGGDSAAAVEKFGMADKMSHISTGGGASLEFMEGKELPGVVCLNDK</sequence>
<reference key="1">
    <citation type="submission" date="2008-10" db="EMBL/GenBank/DDBJ databases">
        <title>Genome sequence of Bacillus cereus G9842.</title>
        <authorList>
            <person name="Dodson R.J."/>
            <person name="Durkin A.S."/>
            <person name="Rosovitz M.J."/>
            <person name="Rasko D.A."/>
            <person name="Hoffmaster A."/>
            <person name="Ravel J."/>
            <person name="Sutton G."/>
        </authorList>
    </citation>
    <scope>NUCLEOTIDE SEQUENCE [LARGE SCALE GENOMIC DNA]</scope>
    <source>
        <strain>G9842</strain>
    </source>
</reference>
<feature type="chain" id="PRO_1000192800" description="Phosphoglycerate kinase">
    <location>
        <begin position="1"/>
        <end position="394"/>
    </location>
</feature>
<feature type="binding site" evidence="1">
    <location>
        <begin position="21"/>
        <end position="23"/>
    </location>
    <ligand>
        <name>substrate</name>
    </ligand>
</feature>
<feature type="binding site" evidence="1">
    <location>
        <position position="36"/>
    </location>
    <ligand>
        <name>substrate</name>
    </ligand>
</feature>
<feature type="binding site" evidence="1">
    <location>
        <begin position="59"/>
        <end position="62"/>
    </location>
    <ligand>
        <name>substrate</name>
    </ligand>
</feature>
<feature type="binding site" evidence="1">
    <location>
        <position position="118"/>
    </location>
    <ligand>
        <name>substrate</name>
    </ligand>
</feature>
<feature type="binding site" evidence="1">
    <location>
        <position position="151"/>
    </location>
    <ligand>
        <name>substrate</name>
    </ligand>
</feature>
<feature type="binding site" evidence="1">
    <location>
        <position position="201"/>
    </location>
    <ligand>
        <name>ATP</name>
        <dbReference type="ChEBI" id="CHEBI:30616"/>
    </ligand>
</feature>
<feature type="binding site" evidence="1">
    <location>
        <position position="292"/>
    </location>
    <ligand>
        <name>ATP</name>
        <dbReference type="ChEBI" id="CHEBI:30616"/>
    </ligand>
</feature>
<feature type="binding site" evidence="1">
    <location>
        <position position="323"/>
    </location>
    <ligand>
        <name>ATP</name>
        <dbReference type="ChEBI" id="CHEBI:30616"/>
    </ligand>
</feature>
<feature type="binding site" evidence="1">
    <location>
        <begin position="350"/>
        <end position="353"/>
    </location>
    <ligand>
        <name>ATP</name>
        <dbReference type="ChEBI" id="CHEBI:30616"/>
    </ligand>
</feature>
<feature type="modified residue" description="Phosphoserine" evidence="1">
    <location>
        <position position="183"/>
    </location>
</feature>
<feature type="modified residue" description="Phosphothreonine" evidence="1">
    <location>
        <position position="299"/>
    </location>
</feature>
<dbReference type="EC" id="2.7.2.3" evidence="1"/>
<dbReference type="EMBL" id="CP001186">
    <property type="protein sequence ID" value="ACK93954.1"/>
    <property type="molecule type" value="Genomic_DNA"/>
</dbReference>
<dbReference type="RefSeq" id="WP_001036332.1">
    <property type="nucleotide sequence ID" value="NC_011772.1"/>
</dbReference>
<dbReference type="KEGG" id="bcg:BCG9842_B5700"/>
<dbReference type="HOGENOM" id="CLU_025427_0_2_9"/>
<dbReference type="UniPathway" id="UPA00109">
    <property type="reaction ID" value="UER00185"/>
</dbReference>
<dbReference type="Proteomes" id="UP000006744">
    <property type="component" value="Chromosome"/>
</dbReference>
<dbReference type="GO" id="GO:0005829">
    <property type="term" value="C:cytosol"/>
    <property type="evidence" value="ECO:0007669"/>
    <property type="project" value="TreeGrafter"/>
</dbReference>
<dbReference type="GO" id="GO:0043531">
    <property type="term" value="F:ADP binding"/>
    <property type="evidence" value="ECO:0007669"/>
    <property type="project" value="TreeGrafter"/>
</dbReference>
<dbReference type="GO" id="GO:0005524">
    <property type="term" value="F:ATP binding"/>
    <property type="evidence" value="ECO:0007669"/>
    <property type="project" value="UniProtKB-KW"/>
</dbReference>
<dbReference type="GO" id="GO:0004618">
    <property type="term" value="F:phosphoglycerate kinase activity"/>
    <property type="evidence" value="ECO:0007669"/>
    <property type="project" value="UniProtKB-UniRule"/>
</dbReference>
<dbReference type="GO" id="GO:0006094">
    <property type="term" value="P:gluconeogenesis"/>
    <property type="evidence" value="ECO:0007669"/>
    <property type="project" value="TreeGrafter"/>
</dbReference>
<dbReference type="GO" id="GO:0006096">
    <property type="term" value="P:glycolytic process"/>
    <property type="evidence" value="ECO:0007669"/>
    <property type="project" value="UniProtKB-UniRule"/>
</dbReference>
<dbReference type="CDD" id="cd00318">
    <property type="entry name" value="Phosphoglycerate_kinase"/>
    <property type="match status" value="1"/>
</dbReference>
<dbReference type="FunFam" id="3.40.50.1260:FF:000001">
    <property type="entry name" value="Phosphoglycerate kinase"/>
    <property type="match status" value="1"/>
</dbReference>
<dbReference type="FunFam" id="3.40.50.1260:FF:000002">
    <property type="entry name" value="Phosphoglycerate kinase"/>
    <property type="match status" value="1"/>
</dbReference>
<dbReference type="Gene3D" id="3.40.50.1260">
    <property type="entry name" value="Phosphoglycerate kinase, N-terminal domain"/>
    <property type="match status" value="2"/>
</dbReference>
<dbReference type="HAMAP" id="MF_00145">
    <property type="entry name" value="Phosphoglyc_kinase"/>
    <property type="match status" value="1"/>
</dbReference>
<dbReference type="InterPro" id="IPR001576">
    <property type="entry name" value="Phosphoglycerate_kinase"/>
</dbReference>
<dbReference type="InterPro" id="IPR015911">
    <property type="entry name" value="Phosphoglycerate_kinase_CS"/>
</dbReference>
<dbReference type="InterPro" id="IPR015824">
    <property type="entry name" value="Phosphoglycerate_kinase_N"/>
</dbReference>
<dbReference type="InterPro" id="IPR036043">
    <property type="entry name" value="Phosphoglycerate_kinase_sf"/>
</dbReference>
<dbReference type="PANTHER" id="PTHR11406">
    <property type="entry name" value="PHOSPHOGLYCERATE KINASE"/>
    <property type="match status" value="1"/>
</dbReference>
<dbReference type="PANTHER" id="PTHR11406:SF23">
    <property type="entry name" value="PHOSPHOGLYCERATE KINASE 1, CHLOROPLASTIC-RELATED"/>
    <property type="match status" value="1"/>
</dbReference>
<dbReference type="Pfam" id="PF00162">
    <property type="entry name" value="PGK"/>
    <property type="match status" value="1"/>
</dbReference>
<dbReference type="PIRSF" id="PIRSF000724">
    <property type="entry name" value="Pgk"/>
    <property type="match status" value="1"/>
</dbReference>
<dbReference type="PRINTS" id="PR00477">
    <property type="entry name" value="PHGLYCKINASE"/>
</dbReference>
<dbReference type="SUPFAM" id="SSF53748">
    <property type="entry name" value="Phosphoglycerate kinase"/>
    <property type="match status" value="1"/>
</dbReference>
<dbReference type="PROSITE" id="PS00111">
    <property type="entry name" value="PGLYCERATE_KINASE"/>
    <property type="match status" value="1"/>
</dbReference>
<comment type="catalytic activity">
    <reaction evidence="1">
        <text>(2R)-3-phosphoglycerate + ATP = (2R)-3-phospho-glyceroyl phosphate + ADP</text>
        <dbReference type="Rhea" id="RHEA:14801"/>
        <dbReference type="ChEBI" id="CHEBI:30616"/>
        <dbReference type="ChEBI" id="CHEBI:57604"/>
        <dbReference type="ChEBI" id="CHEBI:58272"/>
        <dbReference type="ChEBI" id="CHEBI:456216"/>
        <dbReference type="EC" id="2.7.2.3"/>
    </reaction>
</comment>
<comment type="pathway">
    <text evidence="1">Carbohydrate degradation; glycolysis; pyruvate from D-glyceraldehyde 3-phosphate: step 2/5.</text>
</comment>
<comment type="subunit">
    <text evidence="1">Monomer.</text>
</comment>
<comment type="subcellular location">
    <subcellularLocation>
        <location evidence="1">Cytoplasm</location>
    </subcellularLocation>
</comment>
<comment type="similarity">
    <text evidence="1">Belongs to the phosphoglycerate kinase family.</text>
</comment>
<gene>
    <name evidence="1" type="primary">pgk</name>
    <name type="ordered locus">BCG9842_B5700</name>
</gene>